<comment type="function">
    <text evidence="1">Allows the formation of correctly charged Gln-tRNA(Gln) through the transamidation of misacylated Glu-tRNA(Gln) in organisms which lack glutaminyl-tRNA synthetase. The reaction takes place in the presence of glutamine and ATP through an activated gamma-phospho-Glu-tRNA(Gln).</text>
</comment>
<comment type="catalytic activity">
    <reaction evidence="1">
        <text>L-glutamyl-tRNA(Gln) + L-glutamine + ATP + H2O = L-glutaminyl-tRNA(Gln) + L-glutamate + ADP + phosphate + H(+)</text>
        <dbReference type="Rhea" id="RHEA:17521"/>
        <dbReference type="Rhea" id="RHEA-COMP:9681"/>
        <dbReference type="Rhea" id="RHEA-COMP:9684"/>
        <dbReference type="ChEBI" id="CHEBI:15377"/>
        <dbReference type="ChEBI" id="CHEBI:15378"/>
        <dbReference type="ChEBI" id="CHEBI:29985"/>
        <dbReference type="ChEBI" id="CHEBI:30616"/>
        <dbReference type="ChEBI" id="CHEBI:43474"/>
        <dbReference type="ChEBI" id="CHEBI:58359"/>
        <dbReference type="ChEBI" id="CHEBI:78520"/>
        <dbReference type="ChEBI" id="CHEBI:78521"/>
        <dbReference type="ChEBI" id="CHEBI:456216"/>
        <dbReference type="EC" id="6.3.5.7"/>
    </reaction>
</comment>
<comment type="subunit">
    <text evidence="1">Heterotrimer of A, B and C subunits.</text>
</comment>
<comment type="similarity">
    <text evidence="1">Belongs to the amidase family. GatA subfamily.</text>
</comment>
<keyword id="KW-0067">ATP-binding</keyword>
<keyword id="KW-0436">Ligase</keyword>
<keyword id="KW-0547">Nucleotide-binding</keyword>
<keyword id="KW-0648">Protein biosynthesis</keyword>
<reference key="1">
    <citation type="journal article" date="2007" name="PLoS ONE">
        <title>Paradoxical DNA repair and peroxide resistance gene conservation in Bacillus pumilus SAFR-032.</title>
        <authorList>
            <person name="Gioia J."/>
            <person name="Yerrapragada S."/>
            <person name="Qin X."/>
            <person name="Jiang H."/>
            <person name="Igboeli O.C."/>
            <person name="Muzny D."/>
            <person name="Dugan-Rocha S."/>
            <person name="Ding Y."/>
            <person name="Hawes A."/>
            <person name="Liu W."/>
            <person name="Perez L."/>
            <person name="Kovar C."/>
            <person name="Dinh H."/>
            <person name="Lee S."/>
            <person name="Nazareth L."/>
            <person name="Blyth P."/>
            <person name="Holder M."/>
            <person name="Buhay C."/>
            <person name="Tirumalai M.R."/>
            <person name="Liu Y."/>
            <person name="Dasgupta I."/>
            <person name="Bokhetache L."/>
            <person name="Fujita M."/>
            <person name="Karouia F."/>
            <person name="Eswara Moorthy P."/>
            <person name="Siefert J."/>
            <person name="Uzman A."/>
            <person name="Buzumbo P."/>
            <person name="Verma A."/>
            <person name="Zwiya H."/>
            <person name="McWilliams B.D."/>
            <person name="Olowu A."/>
            <person name="Clinkenbeard K.D."/>
            <person name="Newcombe D."/>
            <person name="Golebiewski L."/>
            <person name="Petrosino J.F."/>
            <person name="Nicholson W.L."/>
            <person name="Fox G.E."/>
            <person name="Venkateswaran K."/>
            <person name="Highlander S.K."/>
            <person name="Weinstock G.M."/>
        </authorList>
    </citation>
    <scope>NUCLEOTIDE SEQUENCE [LARGE SCALE GENOMIC DNA]</scope>
    <source>
        <strain>SAFR-032</strain>
    </source>
</reference>
<evidence type="ECO:0000255" key="1">
    <source>
        <dbReference type="HAMAP-Rule" id="MF_00120"/>
    </source>
</evidence>
<gene>
    <name evidence="1" type="primary">gatA</name>
    <name type="ordered locus">BPUM_0645</name>
</gene>
<organism>
    <name type="scientific">Bacillus pumilus (strain SAFR-032)</name>
    <dbReference type="NCBI Taxonomy" id="315750"/>
    <lineage>
        <taxon>Bacteria</taxon>
        <taxon>Bacillati</taxon>
        <taxon>Bacillota</taxon>
        <taxon>Bacilli</taxon>
        <taxon>Bacillales</taxon>
        <taxon>Bacillaceae</taxon>
        <taxon>Bacillus</taxon>
    </lineage>
</organism>
<dbReference type="EC" id="6.3.5.7" evidence="1"/>
<dbReference type="EMBL" id="CP000813">
    <property type="protein sequence ID" value="ABV61337.1"/>
    <property type="molecule type" value="Genomic_DNA"/>
</dbReference>
<dbReference type="RefSeq" id="WP_012009184.1">
    <property type="nucleotide sequence ID" value="NC_009848.4"/>
</dbReference>
<dbReference type="SMR" id="A8FAS0"/>
<dbReference type="STRING" id="315750.BPUM_0645"/>
<dbReference type="GeneID" id="5619893"/>
<dbReference type="KEGG" id="bpu:BPUM_0645"/>
<dbReference type="eggNOG" id="COG0154">
    <property type="taxonomic scope" value="Bacteria"/>
</dbReference>
<dbReference type="HOGENOM" id="CLU_009600_0_3_9"/>
<dbReference type="OrthoDB" id="9811471at2"/>
<dbReference type="Proteomes" id="UP000001355">
    <property type="component" value="Chromosome"/>
</dbReference>
<dbReference type="GO" id="GO:0030956">
    <property type="term" value="C:glutamyl-tRNA(Gln) amidotransferase complex"/>
    <property type="evidence" value="ECO:0007669"/>
    <property type="project" value="InterPro"/>
</dbReference>
<dbReference type="GO" id="GO:0005524">
    <property type="term" value="F:ATP binding"/>
    <property type="evidence" value="ECO:0007669"/>
    <property type="project" value="UniProtKB-KW"/>
</dbReference>
<dbReference type="GO" id="GO:0050567">
    <property type="term" value="F:glutaminyl-tRNA synthase (glutamine-hydrolyzing) activity"/>
    <property type="evidence" value="ECO:0007669"/>
    <property type="project" value="UniProtKB-UniRule"/>
</dbReference>
<dbReference type="GO" id="GO:0006412">
    <property type="term" value="P:translation"/>
    <property type="evidence" value="ECO:0007669"/>
    <property type="project" value="UniProtKB-UniRule"/>
</dbReference>
<dbReference type="Gene3D" id="3.90.1300.10">
    <property type="entry name" value="Amidase signature (AS) domain"/>
    <property type="match status" value="1"/>
</dbReference>
<dbReference type="HAMAP" id="MF_00120">
    <property type="entry name" value="GatA"/>
    <property type="match status" value="1"/>
</dbReference>
<dbReference type="InterPro" id="IPR000120">
    <property type="entry name" value="Amidase"/>
</dbReference>
<dbReference type="InterPro" id="IPR020556">
    <property type="entry name" value="Amidase_CS"/>
</dbReference>
<dbReference type="InterPro" id="IPR023631">
    <property type="entry name" value="Amidase_dom"/>
</dbReference>
<dbReference type="InterPro" id="IPR036928">
    <property type="entry name" value="AS_sf"/>
</dbReference>
<dbReference type="InterPro" id="IPR004412">
    <property type="entry name" value="GatA"/>
</dbReference>
<dbReference type="NCBIfam" id="TIGR00132">
    <property type="entry name" value="gatA"/>
    <property type="match status" value="1"/>
</dbReference>
<dbReference type="PANTHER" id="PTHR11895:SF151">
    <property type="entry name" value="GLUTAMYL-TRNA(GLN) AMIDOTRANSFERASE SUBUNIT A"/>
    <property type="match status" value="1"/>
</dbReference>
<dbReference type="PANTHER" id="PTHR11895">
    <property type="entry name" value="TRANSAMIDASE"/>
    <property type="match status" value="1"/>
</dbReference>
<dbReference type="Pfam" id="PF01425">
    <property type="entry name" value="Amidase"/>
    <property type="match status" value="1"/>
</dbReference>
<dbReference type="SUPFAM" id="SSF75304">
    <property type="entry name" value="Amidase signature (AS) enzymes"/>
    <property type="match status" value="1"/>
</dbReference>
<dbReference type="PROSITE" id="PS00571">
    <property type="entry name" value="AMIDASES"/>
    <property type="match status" value="1"/>
</dbReference>
<proteinExistence type="inferred from homology"/>
<sequence>MSLFDHKISELKELLHKKELSVSDLVDESYKRINEVDGKVQAFLALDEEKARAYAKELDEAVGEKDELGLLFGMPIGVKDNIVTKDLRTTASSKILQNFDPIYDATVVNRLRDAEVVTIGKLNMDEFAMGSSTENSGYKATKNPWNLNTVPGGSSGGSAASVAAGEVPFSLGSDTGGSIRQPASFCGVVGLKPTYGRVSRYGLIAFASSLDQIGPITRNVEDNAYVLQAIAGVDQMDATSANVDVPDFLSSLTGDIKGMKIAVPKEYLGEGVGEEAKESVLQALKVLEGLGATWEEVSLPHSKYALATYYLLSSSEASANLARFDGIRYGYRTDNAENLIDLYKNTRSEGFGNEVKRRIMLGTFALSSGYYDAYYKKAQKVRTLIKKDFEDVFEKYDVIVGPTTPTPAFKIGEKTSDPLTMYANDILTIPVNLAGVPGISVPCGFANGLPLGLQIIGKHFDEGTVYRVAHAFEQATDHHKAKPEL</sequence>
<accession>A8FAS0</accession>
<protein>
    <recommendedName>
        <fullName evidence="1">Glutamyl-tRNA(Gln) amidotransferase subunit A</fullName>
        <shortName evidence="1">Glu-ADT subunit A</shortName>
        <ecNumber evidence="1">6.3.5.7</ecNumber>
    </recommendedName>
</protein>
<name>GATA_BACP2</name>
<feature type="chain" id="PRO_1000057795" description="Glutamyl-tRNA(Gln) amidotransferase subunit A">
    <location>
        <begin position="1"/>
        <end position="485"/>
    </location>
</feature>
<feature type="active site" description="Charge relay system" evidence="1">
    <location>
        <position position="79"/>
    </location>
</feature>
<feature type="active site" description="Charge relay system" evidence="1">
    <location>
        <position position="154"/>
    </location>
</feature>
<feature type="active site" description="Acyl-ester intermediate" evidence="1">
    <location>
        <position position="178"/>
    </location>
</feature>